<reference key="1">
    <citation type="journal article" date="2009" name="PLoS Genet.">
        <title>Organised genome dynamics in the Escherichia coli species results in highly diverse adaptive paths.</title>
        <authorList>
            <person name="Touchon M."/>
            <person name="Hoede C."/>
            <person name="Tenaillon O."/>
            <person name="Barbe V."/>
            <person name="Baeriswyl S."/>
            <person name="Bidet P."/>
            <person name="Bingen E."/>
            <person name="Bonacorsi S."/>
            <person name="Bouchier C."/>
            <person name="Bouvet O."/>
            <person name="Calteau A."/>
            <person name="Chiapello H."/>
            <person name="Clermont O."/>
            <person name="Cruveiller S."/>
            <person name="Danchin A."/>
            <person name="Diard M."/>
            <person name="Dossat C."/>
            <person name="Karoui M.E."/>
            <person name="Frapy E."/>
            <person name="Garry L."/>
            <person name="Ghigo J.M."/>
            <person name="Gilles A.M."/>
            <person name="Johnson J."/>
            <person name="Le Bouguenec C."/>
            <person name="Lescat M."/>
            <person name="Mangenot S."/>
            <person name="Martinez-Jehanne V."/>
            <person name="Matic I."/>
            <person name="Nassif X."/>
            <person name="Oztas S."/>
            <person name="Petit M.A."/>
            <person name="Pichon C."/>
            <person name="Rouy Z."/>
            <person name="Ruf C.S."/>
            <person name="Schneider D."/>
            <person name="Tourret J."/>
            <person name="Vacherie B."/>
            <person name="Vallenet D."/>
            <person name="Medigue C."/>
            <person name="Rocha E.P.C."/>
            <person name="Denamur E."/>
        </authorList>
    </citation>
    <scope>NUCLEOTIDE SEQUENCE [LARGE SCALE GENOMIC DNA]</scope>
    <source>
        <strain>ATCC 35469 / DSM 13698 / BCRC 15582 / CCUG 18766 / IAM 14443 / JCM 21226 / LMG 7866 / NBRC 102419 / NCTC 12128 / CDC 0568-73</strain>
    </source>
</reference>
<proteinExistence type="inferred from homology"/>
<sequence length="334" mass="37783">MSLDINQIALHQLIKRDEQNLELVLRDSLLEPTDTVSEMVAELHRVYSAKNKAYGLFSEESELAQALRLQRQGEEDFLAFSRAATGRLRDELAKYPFADGGFVLFCHYRYLAVEYLLICVLNNLSSMRVNENLDINPTHYLDINHADIVARIDLTEWETNPESTRYLTFLKGRVGRKVADFFMDFLGASEGLNAKAQNRGLLQAVDDFTAEAQLDKAERQNVRQQVYSYCNEQLQAGEEIELESLSKELAGVSEVSFTEFAAEKGYELEESFPADRSTLRQLTKFAGSGGGLTINFDAMLLGERIFWDPATDTLTIKGTPPNLRDQLQRRTSGN</sequence>
<dbReference type="EMBL" id="CU928158">
    <property type="protein sequence ID" value="CAQ89779.1"/>
    <property type="molecule type" value="Genomic_DNA"/>
</dbReference>
<dbReference type="RefSeq" id="WP_000050772.1">
    <property type="nucleotide sequence ID" value="NC_011740.1"/>
</dbReference>
<dbReference type="SMR" id="B7LJS9"/>
<dbReference type="GeneID" id="75056693"/>
<dbReference type="KEGG" id="efe:EFER_2278"/>
<dbReference type="HOGENOM" id="CLU_063050_0_1_6"/>
<dbReference type="OrthoDB" id="9131762at2"/>
<dbReference type="Proteomes" id="UP000000745">
    <property type="component" value="Chromosome"/>
</dbReference>
<dbReference type="GO" id="GO:0043590">
    <property type="term" value="C:bacterial nucleoid"/>
    <property type="evidence" value="ECO:0007669"/>
    <property type="project" value="TreeGrafter"/>
</dbReference>
<dbReference type="GO" id="GO:0005737">
    <property type="term" value="C:cytoplasm"/>
    <property type="evidence" value="ECO:0007669"/>
    <property type="project" value="UniProtKB-UniRule"/>
</dbReference>
<dbReference type="GO" id="GO:0003690">
    <property type="term" value="F:double-stranded DNA binding"/>
    <property type="evidence" value="ECO:0007669"/>
    <property type="project" value="TreeGrafter"/>
</dbReference>
<dbReference type="GO" id="GO:0003727">
    <property type="term" value="F:single-stranded RNA binding"/>
    <property type="evidence" value="ECO:0007669"/>
    <property type="project" value="TreeGrafter"/>
</dbReference>
<dbReference type="HAMAP" id="MF_00730">
    <property type="entry name" value="NdpA"/>
    <property type="match status" value="1"/>
</dbReference>
<dbReference type="InterPro" id="IPR007358">
    <property type="entry name" value="Nucleoid_associated_NdpA"/>
</dbReference>
<dbReference type="NCBIfam" id="NF001557">
    <property type="entry name" value="PRK00378.1"/>
    <property type="match status" value="1"/>
</dbReference>
<dbReference type="PANTHER" id="PTHR38772">
    <property type="match status" value="1"/>
</dbReference>
<dbReference type="PANTHER" id="PTHR38772:SF1">
    <property type="entry name" value="NUCLEOID-ASSOCIATED PROTEIN YEJK"/>
    <property type="match status" value="1"/>
</dbReference>
<dbReference type="Pfam" id="PF04245">
    <property type="entry name" value="NA37"/>
    <property type="match status" value="1"/>
</dbReference>
<gene>
    <name evidence="1" type="primary">yejK</name>
    <name type="ordered locus">EFER_2278</name>
</gene>
<name>NDPA_ESCF3</name>
<feature type="chain" id="PRO_1000191564" description="Nucleoid-associated protein YejK">
    <location>
        <begin position="1"/>
        <end position="334"/>
    </location>
</feature>
<protein>
    <recommendedName>
        <fullName evidence="1">Nucleoid-associated protein YejK</fullName>
    </recommendedName>
</protein>
<comment type="subcellular location">
    <subcellularLocation>
        <location evidence="1">Cytoplasm</location>
        <location evidence="1">Nucleoid</location>
    </subcellularLocation>
</comment>
<comment type="similarity">
    <text evidence="1">Belongs to the YejK family.</text>
</comment>
<accession>B7LJS9</accession>
<organism>
    <name type="scientific">Escherichia fergusonii (strain ATCC 35469 / DSM 13698 / CCUG 18766 / IAM 14443 / JCM 21226 / LMG 7866 / NBRC 102419 / NCTC 12128 / CDC 0568-73)</name>
    <dbReference type="NCBI Taxonomy" id="585054"/>
    <lineage>
        <taxon>Bacteria</taxon>
        <taxon>Pseudomonadati</taxon>
        <taxon>Pseudomonadota</taxon>
        <taxon>Gammaproteobacteria</taxon>
        <taxon>Enterobacterales</taxon>
        <taxon>Enterobacteriaceae</taxon>
        <taxon>Escherichia</taxon>
    </lineage>
</organism>
<keyword id="KW-0963">Cytoplasm</keyword>
<evidence type="ECO:0000255" key="1">
    <source>
        <dbReference type="HAMAP-Rule" id="MF_00730"/>
    </source>
</evidence>